<sequence length="149" mass="16832">MADQLTDDQIAEFKEAFSLFDKDGDGCITTKELGTVMRSLGQNPTEAELQDMINEVDADGNGTIDFPEFLNLMARKMKDTDSEEELKEAFRVFDKDQNGFISAAELRHVMTNLGEKLTDEEVEEMIREADVDGDGQINYDEFVKVMMAK</sequence>
<reference key="1">
    <citation type="journal article" date="2002" name="Nature">
        <title>The genome sequence and structure of rice chromosome 1.</title>
        <authorList>
            <person name="Sasaki T."/>
            <person name="Matsumoto T."/>
            <person name="Yamamoto K."/>
            <person name="Sakata K."/>
            <person name="Baba T."/>
            <person name="Katayose Y."/>
            <person name="Wu J."/>
            <person name="Niimura Y."/>
            <person name="Cheng Z."/>
            <person name="Nagamura Y."/>
            <person name="Antonio B.A."/>
            <person name="Kanamori H."/>
            <person name="Hosokawa S."/>
            <person name="Masukawa M."/>
            <person name="Arikawa K."/>
            <person name="Chiden Y."/>
            <person name="Hayashi M."/>
            <person name="Okamoto M."/>
            <person name="Ando T."/>
            <person name="Aoki H."/>
            <person name="Arita K."/>
            <person name="Hamada M."/>
            <person name="Harada C."/>
            <person name="Hijishita S."/>
            <person name="Honda M."/>
            <person name="Ichikawa Y."/>
            <person name="Idonuma A."/>
            <person name="Iijima M."/>
            <person name="Ikeda M."/>
            <person name="Ikeno M."/>
            <person name="Ito S."/>
            <person name="Ito T."/>
            <person name="Ito Y."/>
            <person name="Ito Y."/>
            <person name="Iwabuchi A."/>
            <person name="Kamiya K."/>
            <person name="Karasawa W."/>
            <person name="Katagiri S."/>
            <person name="Kikuta A."/>
            <person name="Kobayashi N."/>
            <person name="Kono I."/>
            <person name="Machita K."/>
            <person name="Maehara T."/>
            <person name="Mizuno H."/>
            <person name="Mizubayashi T."/>
            <person name="Mukai Y."/>
            <person name="Nagasaki H."/>
            <person name="Nakashima M."/>
            <person name="Nakama Y."/>
            <person name="Nakamichi Y."/>
            <person name="Nakamura M."/>
            <person name="Namiki N."/>
            <person name="Negishi M."/>
            <person name="Ohta I."/>
            <person name="Ono N."/>
            <person name="Saji S."/>
            <person name="Sakai K."/>
            <person name="Shibata M."/>
            <person name="Shimokawa T."/>
            <person name="Shomura A."/>
            <person name="Song J."/>
            <person name="Takazaki Y."/>
            <person name="Terasawa K."/>
            <person name="Tsuji K."/>
            <person name="Waki K."/>
            <person name="Yamagata H."/>
            <person name="Yamane H."/>
            <person name="Yoshiki S."/>
            <person name="Yoshihara R."/>
            <person name="Yukawa K."/>
            <person name="Zhong H."/>
            <person name="Iwama H."/>
            <person name="Endo T."/>
            <person name="Ito H."/>
            <person name="Hahn J.H."/>
            <person name="Kim H.-I."/>
            <person name="Eun M.-Y."/>
            <person name="Yano M."/>
            <person name="Jiang J."/>
            <person name="Gojobori T."/>
        </authorList>
    </citation>
    <scope>NUCLEOTIDE SEQUENCE [LARGE SCALE GENOMIC DNA]</scope>
    <source>
        <strain>cv. Nipponbare</strain>
    </source>
</reference>
<reference key="2">
    <citation type="journal article" date="2005" name="Nature">
        <title>The map-based sequence of the rice genome.</title>
        <authorList>
            <consortium name="International rice genome sequencing project (IRGSP)"/>
        </authorList>
    </citation>
    <scope>NUCLEOTIDE SEQUENCE [LARGE SCALE GENOMIC DNA]</scope>
    <source>
        <strain>cv. Nipponbare</strain>
    </source>
</reference>
<reference key="3">
    <citation type="journal article" date="2008" name="Nucleic Acids Res.">
        <title>The rice annotation project database (RAP-DB): 2008 update.</title>
        <authorList>
            <consortium name="The rice annotation project (RAP)"/>
        </authorList>
    </citation>
    <scope>GENOME REANNOTATION</scope>
    <source>
        <strain>cv. Nipponbare</strain>
    </source>
</reference>
<reference key="4">
    <citation type="journal article" date="2013" name="Rice">
        <title>Improvement of the Oryza sativa Nipponbare reference genome using next generation sequence and optical map data.</title>
        <authorList>
            <person name="Kawahara Y."/>
            <person name="de la Bastide M."/>
            <person name="Hamilton J.P."/>
            <person name="Kanamori H."/>
            <person name="McCombie W.R."/>
            <person name="Ouyang S."/>
            <person name="Schwartz D.C."/>
            <person name="Tanaka T."/>
            <person name="Wu J."/>
            <person name="Zhou S."/>
            <person name="Childs K.L."/>
            <person name="Davidson R.M."/>
            <person name="Lin H."/>
            <person name="Quesada-Ocampo L."/>
            <person name="Vaillancourt B."/>
            <person name="Sakai H."/>
            <person name="Lee S.S."/>
            <person name="Kim J."/>
            <person name="Numa H."/>
            <person name="Itoh T."/>
            <person name="Buell C.R."/>
            <person name="Matsumoto T."/>
        </authorList>
    </citation>
    <scope>GENOME REANNOTATION</scope>
    <source>
        <strain>cv. Nipponbare</strain>
    </source>
</reference>
<reference key="5">
    <citation type="journal article" date="2005" name="PLoS Biol.">
        <title>The genomes of Oryza sativa: a history of duplications.</title>
        <authorList>
            <person name="Yu J."/>
            <person name="Wang J."/>
            <person name="Lin W."/>
            <person name="Li S."/>
            <person name="Li H."/>
            <person name="Zhou J."/>
            <person name="Ni P."/>
            <person name="Dong W."/>
            <person name="Hu S."/>
            <person name="Zeng C."/>
            <person name="Zhang J."/>
            <person name="Zhang Y."/>
            <person name="Li R."/>
            <person name="Xu Z."/>
            <person name="Li S."/>
            <person name="Li X."/>
            <person name="Zheng H."/>
            <person name="Cong L."/>
            <person name="Lin L."/>
            <person name="Yin J."/>
            <person name="Geng J."/>
            <person name="Li G."/>
            <person name="Shi J."/>
            <person name="Liu J."/>
            <person name="Lv H."/>
            <person name="Li J."/>
            <person name="Wang J."/>
            <person name="Deng Y."/>
            <person name="Ran L."/>
            <person name="Shi X."/>
            <person name="Wang X."/>
            <person name="Wu Q."/>
            <person name="Li C."/>
            <person name="Ren X."/>
            <person name="Wang J."/>
            <person name="Wang X."/>
            <person name="Li D."/>
            <person name="Liu D."/>
            <person name="Zhang X."/>
            <person name="Ji Z."/>
            <person name="Zhao W."/>
            <person name="Sun Y."/>
            <person name="Zhang Z."/>
            <person name="Bao J."/>
            <person name="Han Y."/>
            <person name="Dong L."/>
            <person name="Ji J."/>
            <person name="Chen P."/>
            <person name="Wu S."/>
            <person name="Liu J."/>
            <person name="Xiao Y."/>
            <person name="Bu D."/>
            <person name="Tan J."/>
            <person name="Yang L."/>
            <person name="Ye C."/>
            <person name="Zhang J."/>
            <person name="Xu J."/>
            <person name="Zhou Y."/>
            <person name="Yu Y."/>
            <person name="Zhang B."/>
            <person name="Zhuang S."/>
            <person name="Wei H."/>
            <person name="Liu B."/>
            <person name="Lei M."/>
            <person name="Yu H."/>
            <person name="Li Y."/>
            <person name="Xu H."/>
            <person name="Wei S."/>
            <person name="He X."/>
            <person name="Fang L."/>
            <person name="Zhang Z."/>
            <person name="Zhang Y."/>
            <person name="Huang X."/>
            <person name="Su Z."/>
            <person name="Tong W."/>
            <person name="Li J."/>
            <person name="Tong Z."/>
            <person name="Li S."/>
            <person name="Ye J."/>
            <person name="Wang L."/>
            <person name="Fang L."/>
            <person name="Lei T."/>
            <person name="Chen C.-S."/>
            <person name="Chen H.-C."/>
            <person name="Xu Z."/>
            <person name="Li H."/>
            <person name="Huang H."/>
            <person name="Zhang F."/>
            <person name="Xu H."/>
            <person name="Li N."/>
            <person name="Zhao C."/>
            <person name="Li S."/>
            <person name="Dong L."/>
            <person name="Huang Y."/>
            <person name="Li L."/>
            <person name="Xi Y."/>
            <person name="Qi Q."/>
            <person name="Li W."/>
            <person name="Zhang B."/>
            <person name="Hu W."/>
            <person name="Zhang Y."/>
            <person name="Tian X."/>
            <person name="Jiao Y."/>
            <person name="Liang X."/>
            <person name="Jin J."/>
            <person name="Gao L."/>
            <person name="Zheng W."/>
            <person name="Hao B."/>
            <person name="Liu S.-M."/>
            <person name="Wang W."/>
            <person name="Yuan L."/>
            <person name="Cao M."/>
            <person name="McDermott J."/>
            <person name="Samudrala R."/>
            <person name="Wang J."/>
            <person name="Wong G.K.-S."/>
            <person name="Yang H."/>
        </authorList>
    </citation>
    <scope>NUCLEOTIDE SEQUENCE [LARGE SCALE GENOMIC DNA]</scope>
    <source>
        <strain>cv. Nipponbare</strain>
    </source>
</reference>
<reference key="6">
    <citation type="journal article" date="2003" name="Science">
        <title>Collection, mapping, and annotation of over 28,000 cDNA clones from japonica rice.</title>
        <authorList>
            <consortium name="The rice full-length cDNA consortium"/>
        </authorList>
    </citation>
    <scope>NUCLEOTIDE SEQUENCE [LARGE SCALE MRNA]</scope>
    <source>
        <strain>cv. Nipponbare</strain>
    </source>
</reference>
<reference key="7">
    <citation type="journal article" date="2007" name="BMC Plant Biol.">
        <title>Genome-wide identification and analyses of the rice calmodulin and related potential calcium sensor proteins.</title>
        <authorList>
            <person name="Boonburapong B."/>
            <person name="Buaboocha T."/>
        </authorList>
    </citation>
    <scope>GENE FAMILY</scope>
    <scope>NOMENCLATURE</scope>
</reference>
<protein>
    <recommendedName>
        <fullName>Calmodulin-3</fullName>
        <shortName>CaM-3</shortName>
    </recommendedName>
</protein>
<name>CALM3_ORYSJ</name>
<accession>Q0JNL7</accession>
<accession>A2ZRU3</accession>
<accession>B7E316</accession>
<accession>P29612</accession>
<accession>Q9SDJ0</accession>
<keyword id="KW-0007">Acetylation</keyword>
<keyword id="KW-0106">Calcium</keyword>
<keyword id="KW-0479">Metal-binding</keyword>
<keyword id="KW-0488">Methylation</keyword>
<keyword id="KW-1185">Reference proteome</keyword>
<keyword id="KW-0677">Repeat</keyword>
<organism>
    <name type="scientific">Oryza sativa subsp. japonica</name>
    <name type="common">Rice</name>
    <dbReference type="NCBI Taxonomy" id="39947"/>
    <lineage>
        <taxon>Eukaryota</taxon>
        <taxon>Viridiplantae</taxon>
        <taxon>Streptophyta</taxon>
        <taxon>Embryophyta</taxon>
        <taxon>Tracheophyta</taxon>
        <taxon>Spermatophyta</taxon>
        <taxon>Magnoliopsida</taxon>
        <taxon>Liliopsida</taxon>
        <taxon>Poales</taxon>
        <taxon>Poaceae</taxon>
        <taxon>BOP clade</taxon>
        <taxon>Oryzoideae</taxon>
        <taxon>Oryzeae</taxon>
        <taxon>Oryzinae</taxon>
        <taxon>Oryza</taxon>
        <taxon>Oryza sativa</taxon>
    </lineage>
</organism>
<proteinExistence type="evidence at transcript level"/>
<feature type="initiator methionine" description="Removed" evidence="1">
    <location>
        <position position="1"/>
    </location>
</feature>
<feature type="chain" id="PRO_0000247890" description="Calmodulin-3">
    <location>
        <begin position="2"/>
        <end position="149"/>
    </location>
</feature>
<feature type="domain" description="EF-hand 1" evidence="2">
    <location>
        <begin position="8"/>
        <end position="43"/>
    </location>
</feature>
<feature type="domain" description="EF-hand 2" evidence="2">
    <location>
        <begin position="44"/>
        <end position="79"/>
    </location>
</feature>
<feature type="domain" description="EF-hand 3" evidence="2">
    <location>
        <begin position="81"/>
        <end position="116"/>
    </location>
</feature>
<feature type="domain" description="EF-hand 4" evidence="2">
    <location>
        <begin position="117"/>
        <end position="149"/>
    </location>
</feature>
<feature type="binding site" evidence="2">
    <location>
        <position position="21"/>
    </location>
    <ligand>
        <name>Ca(2+)</name>
        <dbReference type="ChEBI" id="CHEBI:29108"/>
        <label>1</label>
    </ligand>
</feature>
<feature type="binding site" evidence="2">
    <location>
        <position position="23"/>
    </location>
    <ligand>
        <name>Ca(2+)</name>
        <dbReference type="ChEBI" id="CHEBI:29108"/>
        <label>1</label>
    </ligand>
</feature>
<feature type="binding site" evidence="2">
    <location>
        <position position="25"/>
    </location>
    <ligand>
        <name>Ca(2+)</name>
        <dbReference type="ChEBI" id="CHEBI:29108"/>
        <label>1</label>
    </ligand>
</feature>
<feature type="binding site" evidence="2">
    <location>
        <position position="27"/>
    </location>
    <ligand>
        <name>Ca(2+)</name>
        <dbReference type="ChEBI" id="CHEBI:29108"/>
        <label>1</label>
    </ligand>
</feature>
<feature type="binding site" evidence="2">
    <location>
        <position position="32"/>
    </location>
    <ligand>
        <name>Ca(2+)</name>
        <dbReference type="ChEBI" id="CHEBI:29108"/>
        <label>1</label>
    </ligand>
</feature>
<feature type="binding site" evidence="2">
    <location>
        <position position="57"/>
    </location>
    <ligand>
        <name>Ca(2+)</name>
        <dbReference type="ChEBI" id="CHEBI:29108"/>
        <label>2</label>
    </ligand>
</feature>
<feature type="binding site" evidence="2">
    <location>
        <position position="59"/>
    </location>
    <ligand>
        <name>Ca(2+)</name>
        <dbReference type="ChEBI" id="CHEBI:29108"/>
        <label>2</label>
    </ligand>
</feature>
<feature type="binding site" evidence="2">
    <location>
        <position position="61"/>
    </location>
    <ligand>
        <name>Ca(2+)</name>
        <dbReference type="ChEBI" id="CHEBI:29108"/>
        <label>2</label>
    </ligand>
</feature>
<feature type="binding site" evidence="2">
    <location>
        <position position="63"/>
    </location>
    <ligand>
        <name>Ca(2+)</name>
        <dbReference type="ChEBI" id="CHEBI:29108"/>
        <label>2</label>
    </ligand>
</feature>
<feature type="binding site" evidence="2">
    <location>
        <position position="68"/>
    </location>
    <ligand>
        <name>Ca(2+)</name>
        <dbReference type="ChEBI" id="CHEBI:29108"/>
        <label>2</label>
    </ligand>
</feature>
<feature type="binding site" evidence="2">
    <location>
        <position position="94"/>
    </location>
    <ligand>
        <name>Ca(2+)</name>
        <dbReference type="ChEBI" id="CHEBI:29108"/>
        <label>3</label>
    </ligand>
</feature>
<feature type="binding site" evidence="2">
    <location>
        <position position="96"/>
    </location>
    <ligand>
        <name>Ca(2+)</name>
        <dbReference type="ChEBI" id="CHEBI:29108"/>
        <label>3</label>
    </ligand>
</feature>
<feature type="binding site" evidence="2">
    <location>
        <position position="98"/>
    </location>
    <ligand>
        <name>Ca(2+)</name>
        <dbReference type="ChEBI" id="CHEBI:29108"/>
        <label>3</label>
    </ligand>
</feature>
<feature type="binding site" evidence="2">
    <location>
        <position position="105"/>
    </location>
    <ligand>
        <name>Ca(2+)</name>
        <dbReference type="ChEBI" id="CHEBI:29108"/>
        <label>3</label>
    </ligand>
</feature>
<feature type="binding site" evidence="2">
    <location>
        <position position="130"/>
    </location>
    <ligand>
        <name>Ca(2+)</name>
        <dbReference type="ChEBI" id="CHEBI:29108"/>
        <label>4</label>
    </ligand>
</feature>
<feature type="binding site" evidence="2">
    <location>
        <position position="132"/>
    </location>
    <ligand>
        <name>Ca(2+)</name>
        <dbReference type="ChEBI" id="CHEBI:29108"/>
        <label>4</label>
    </ligand>
</feature>
<feature type="binding site" evidence="2">
    <location>
        <position position="134"/>
    </location>
    <ligand>
        <name>Ca(2+)</name>
        <dbReference type="ChEBI" id="CHEBI:29108"/>
        <label>4</label>
    </ligand>
</feature>
<feature type="binding site" evidence="2">
    <location>
        <position position="136"/>
    </location>
    <ligand>
        <name>Ca(2+)</name>
        <dbReference type="ChEBI" id="CHEBI:29108"/>
        <label>4</label>
    </ligand>
</feature>
<feature type="binding site" evidence="2">
    <location>
        <position position="141"/>
    </location>
    <ligand>
        <name>Ca(2+)</name>
        <dbReference type="ChEBI" id="CHEBI:29108"/>
        <label>4</label>
    </ligand>
</feature>
<feature type="modified residue" description="N-acetylalanine" evidence="1">
    <location>
        <position position="2"/>
    </location>
</feature>
<feature type="modified residue" description="N6,N6,N6-trimethyllysine" evidence="1">
    <location>
        <position position="116"/>
    </location>
</feature>
<dbReference type="EMBL" id="AP000815">
    <property type="protein sequence ID" value="BAA87825.1"/>
    <property type="molecule type" value="Genomic_DNA"/>
</dbReference>
<dbReference type="EMBL" id="AP008207">
    <property type="protein sequence ID" value="BAF04661.1"/>
    <property type="molecule type" value="Genomic_DNA"/>
</dbReference>
<dbReference type="EMBL" id="AP014957">
    <property type="protein sequence ID" value="BAS71582.1"/>
    <property type="molecule type" value="Genomic_DNA"/>
</dbReference>
<dbReference type="EMBL" id="CM000138">
    <property type="protein sequence ID" value="EEE54334.1"/>
    <property type="molecule type" value="Genomic_DNA"/>
</dbReference>
<dbReference type="EMBL" id="AK058646">
    <property type="protein sequence ID" value="BAG86763.1"/>
    <property type="molecule type" value="mRNA"/>
</dbReference>
<dbReference type="RefSeq" id="XP_015621336.1">
    <property type="nucleotide sequence ID" value="XM_015765850.1"/>
</dbReference>
<dbReference type="SMR" id="Q0JNL7"/>
<dbReference type="BioGRID" id="795940">
    <property type="interactions" value="1"/>
</dbReference>
<dbReference type="FunCoup" id="Q0JNL7">
    <property type="interactions" value="2256"/>
</dbReference>
<dbReference type="STRING" id="39947.Q0JNL7"/>
<dbReference type="PaxDb" id="39947-Q0JNL7"/>
<dbReference type="EnsemblPlants" id="Os01t0279300-01">
    <property type="protein sequence ID" value="Os01t0279300-01"/>
    <property type="gene ID" value="Os01g0279300"/>
</dbReference>
<dbReference type="Gramene" id="Os01t0279300-01">
    <property type="protein sequence ID" value="Os01t0279300-01"/>
    <property type="gene ID" value="Os01g0279300"/>
</dbReference>
<dbReference type="KEGG" id="dosa:Os01g0279300"/>
<dbReference type="eggNOG" id="KOG0027">
    <property type="taxonomic scope" value="Eukaryota"/>
</dbReference>
<dbReference type="HOGENOM" id="CLU_061288_2_0_1"/>
<dbReference type="InParanoid" id="Q0JNL7"/>
<dbReference type="OMA" id="DEMIREP"/>
<dbReference type="OrthoDB" id="727752at2759"/>
<dbReference type="Proteomes" id="UP000000763">
    <property type="component" value="Chromosome 1"/>
</dbReference>
<dbReference type="Proteomes" id="UP000007752">
    <property type="component" value="Chromosome 1"/>
</dbReference>
<dbReference type="Proteomes" id="UP000059680">
    <property type="component" value="Chromosome 1"/>
</dbReference>
<dbReference type="GO" id="GO:0005737">
    <property type="term" value="C:cytoplasm"/>
    <property type="evidence" value="ECO:0000318"/>
    <property type="project" value="GO_Central"/>
</dbReference>
<dbReference type="GO" id="GO:0005509">
    <property type="term" value="F:calcium ion binding"/>
    <property type="evidence" value="ECO:0000318"/>
    <property type="project" value="GO_Central"/>
</dbReference>
<dbReference type="GO" id="GO:0030234">
    <property type="term" value="F:enzyme regulator activity"/>
    <property type="evidence" value="ECO:0000318"/>
    <property type="project" value="GO_Central"/>
</dbReference>
<dbReference type="CDD" id="cd00051">
    <property type="entry name" value="EFh"/>
    <property type="match status" value="2"/>
</dbReference>
<dbReference type="FunFam" id="1.10.238.10:FF:000034">
    <property type="entry name" value="Calmodulin"/>
    <property type="match status" value="1"/>
</dbReference>
<dbReference type="FunFam" id="1.10.238.10:FF:000042">
    <property type="entry name" value="Calmodulin"/>
    <property type="match status" value="1"/>
</dbReference>
<dbReference type="Gene3D" id="1.10.238.10">
    <property type="entry name" value="EF-hand"/>
    <property type="match status" value="3"/>
</dbReference>
<dbReference type="InterPro" id="IPR050230">
    <property type="entry name" value="CALM/Myosin/TropC-like"/>
</dbReference>
<dbReference type="InterPro" id="IPR011992">
    <property type="entry name" value="EF-hand-dom_pair"/>
</dbReference>
<dbReference type="InterPro" id="IPR018247">
    <property type="entry name" value="EF_Hand_1_Ca_BS"/>
</dbReference>
<dbReference type="InterPro" id="IPR002048">
    <property type="entry name" value="EF_hand_dom"/>
</dbReference>
<dbReference type="PANTHER" id="PTHR23048:SF53">
    <property type="entry name" value="CALMODULIN"/>
    <property type="match status" value="1"/>
</dbReference>
<dbReference type="PANTHER" id="PTHR23048">
    <property type="entry name" value="MYOSIN LIGHT CHAIN 1, 3"/>
    <property type="match status" value="1"/>
</dbReference>
<dbReference type="Pfam" id="PF13499">
    <property type="entry name" value="EF-hand_7"/>
    <property type="match status" value="2"/>
</dbReference>
<dbReference type="SMART" id="SM00054">
    <property type="entry name" value="EFh"/>
    <property type="match status" value="4"/>
</dbReference>
<dbReference type="SUPFAM" id="SSF47473">
    <property type="entry name" value="EF-hand"/>
    <property type="match status" value="1"/>
</dbReference>
<dbReference type="PROSITE" id="PS00018">
    <property type="entry name" value="EF_HAND_1"/>
    <property type="match status" value="4"/>
</dbReference>
<dbReference type="PROSITE" id="PS50222">
    <property type="entry name" value="EF_HAND_2"/>
    <property type="match status" value="4"/>
</dbReference>
<evidence type="ECO:0000250" key="1"/>
<evidence type="ECO:0000255" key="2">
    <source>
        <dbReference type="PROSITE-ProRule" id="PRU00448"/>
    </source>
</evidence>
<evidence type="ECO:0000305" key="3"/>
<evidence type="ECO:0000312" key="4">
    <source>
        <dbReference type="EMBL" id="EEE54334.1"/>
    </source>
</evidence>
<gene>
    <name type="primary">CAM3</name>
    <name type="ordered locus">Os01g0279300</name>
    <name type="ordered locus">LOC_Os01g17190</name>
    <name type="ORF">OsJ_001265</name>
    <name evidence="4" type="ORF">OsJ_01307</name>
    <name type="ORF">P0003H10.4</name>
</gene>
<comment type="function">
    <text>Calmodulin mediates the control of a large number of enzymes, ion channels and other proteins by Ca(2+). Among the enzymes to be stimulated by the calmodulin-Ca(2+) complex are a number of protein kinases and phosphatases.</text>
</comment>
<comment type="miscellaneous">
    <text>This protein has four functional calcium-binding sites.</text>
</comment>
<comment type="similarity">
    <text evidence="3">Belongs to the calmodulin family.</text>
</comment>